<evidence type="ECO:0000250" key="1"/>
<evidence type="ECO:0000250" key="2">
    <source>
        <dbReference type="UniProtKB" id="P37231"/>
    </source>
</evidence>
<evidence type="ECO:0000250" key="3">
    <source>
        <dbReference type="UniProtKB" id="P37238"/>
    </source>
</evidence>
<evidence type="ECO:0000255" key="4">
    <source>
        <dbReference type="PROSITE-ProRule" id="PRU00407"/>
    </source>
</evidence>
<evidence type="ECO:0000255" key="5">
    <source>
        <dbReference type="PROSITE-ProRule" id="PRU01189"/>
    </source>
</evidence>
<evidence type="ECO:0000256" key="6">
    <source>
        <dbReference type="SAM" id="MobiDB-lite"/>
    </source>
</evidence>
<evidence type="ECO:0000305" key="7"/>
<feature type="chain" id="PRO_0000053498" description="Peroxisome proliferator-activated receptor gamma">
    <location>
        <begin position="1"/>
        <end position="477"/>
    </location>
</feature>
<feature type="domain" description="NR LBD" evidence="5">
    <location>
        <begin position="252"/>
        <end position="475"/>
    </location>
</feature>
<feature type="DNA-binding region" description="Nuclear receptor" evidence="4">
    <location>
        <begin position="110"/>
        <end position="184"/>
    </location>
</feature>
<feature type="zinc finger region" description="NR C4-type" evidence="4">
    <location>
        <begin position="113"/>
        <end position="133"/>
    </location>
</feature>
<feature type="zinc finger region" description="NR C4-type" evidence="4">
    <location>
        <begin position="150"/>
        <end position="172"/>
    </location>
</feature>
<feature type="region of interest" description="Disordered" evidence="6">
    <location>
        <begin position="231"/>
        <end position="281"/>
    </location>
</feature>
<feature type="short sequence motif" description="9aaTAD" evidence="2">
    <location>
        <begin position="467"/>
        <end position="475"/>
    </location>
</feature>
<feature type="modified residue" description="Phosphoserine; by MAPK" evidence="1">
    <location>
        <position position="87"/>
    </location>
</feature>
<comment type="function">
    <text evidence="3">Receptor that binds peroxisome proliferators such as hypolipidemic drugs and fatty acids. Once activated by a ligand, the receptor binds to a promoter element in the gene for acyl-CoA oxidase and activates its transcription. It therefore controls the peroxisomal beta-oxidation pathway of fatty acids. Key regulator of adipocyte differentiation and glucose homeostasis. May play a role in the regulation of circadian rhythm (By similarity).</text>
</comment>
<comment type="subunit">
    <text>Heterodimer with the retinoid X receptor.</text>
</comment>
<comment type="subcellular location">
    <subcellularLocation>
        <location>Nucleus</location>
    </subcellularLocation>
    <subcellularLocation>
        <location evidence="1">Cytoplasm</location>
    </subcellularLocation>
</comment>
<comment type="tissue specificity">
    <text>Expressed mainly in adipose tissue and kidney.</text>
</comment>
<comment type="developmental stage">
    <text>Adult.</text>
</comment>
<comment type="domain">
    <text evidence="2">The 9aaTAD motif is a transactivation domain present in a large number of yeast and animal transcription factors.</text>
</comment>
<comment type="similarity">
    <text evidence="7">Belongs to the nuclear hormone receptor family. NR1 subfamily.</text>
</comment>
<accession>P37234</accession>
<proteinExistence type="evidence at protein level"/>
<gene>
    <name type="primary">pparg</name>
    <name type="synonym">nr1c3</name>
</gene>
<name>PPARG_XENLA</name>
<sequence>MVDTEMPFWSNLNFGMNSMDMSALEDHCQPYDIKPFTTVDFSSINSHYDDILDEKTFLCRNDQSPIDYKYDLKLQECQSSIKLEPPSPPYFSDKPQCSKAFEDTPNSFIAIECRVCGDKASGFHYGVHACEGCKGFFRRTIRLKLIYERCDLNCRIHKKSRNKCQFCRFQKCLAVGMSHNAIRFGRMPQAEKEKLLAEISSDIDQLNPESADQRVLAKHLYDSYVKSFPLTKAKAPGHPDGQSHRQNSRGYTRHELADDGGGSDQGAVREPRAEQGGGDSNLPALSVALRGGVREITEFAKNIPGFVSLDLNDQVTLLKYGVHEIIFTMLASLMNKDGVLVAEGQGFMTREFLKSLRKPFSDFMEPKFEFAIRFNSLELDDSDLAIFVAVIILSGDRPGLLNVKPIEDIQDSLLQALELQLKLNHPDSAQLFAKLLQKMTDLRQVVTEHVQLLQLIKKTEADMCLHPLLQEIYKDLY</sequence>
<organism>
    <name type="scientific">Xenopus laevis</name>
    <name type="common">African clawed frog</name>
    <dbReference type="NCBI Taxonomy" id="8355"/>
    <lineage>
        <taxon>Eukaryota</taxon>
        <taxon>Metazoa</taxon>
        <taxon>Chordata</taxon>
        <taxon>Craniata</taxon>
        <taxon>Vertebrata</taxon>
        <taxon>Euteleostomi</taxon>
        <taxon>Amphibia</taxon>
        <taxon>Batrachia</taxon>
        <taxon>Anura</taxon>
        <taxon>Pipoidea</taxon>
        <taxon>Pipidae</taxon>
        <taxon>Xenopodinae</taxon>
        <taxon>Xenopus</taxon>
        <taxon>Xenopus</taxon>
    </lineage>
</organism>
<reference key="1">
    <citation type="journal article" date="1992" name="Cell">
        <title>Control of the peroxisomal beta-oxidation pathway by a novel family of nuclear hormone receptors.</title>
        <authorList>
            <person name="Dreyer C."/>
            <person name="Krey G."/>
            <person name="Keller H."/>
            <person name="Givel F."/>
            <person name="Helftenbein G."/>
            <person name="Wahli W."/>
        </authorList>
    </citation>
    <scope>NUCLEOTIDE SEQUENCE [MRNA]</scope>
</reference>
<reference key="2">
    <citation type="journal article" date="1993" name="J. Steroid Biochem. Mol. Biol.">
        <title>Xenopus peroxisome proliferator activated receptors: genomic organization, response element recognition, heterodimer formation with retinoid X receptor and activation by fatty acids.</title>
        <authorList>
            <person name="Krey G."/>
            <person name="Keller H."/>
            <person name="Mahfoudi A."/>
            <person name="Medin J."/>
            <person name="Ozato K."/>
            <person name="Dreyer C."/>
            <person name="Wahli W."/>
        </authorList>
    </citation>
    <scope>CHARACTERIZATION</scope>
</reference>
<dbReference type="EMBL" id="M84163">
    <property type="protein sequence ID" value="AAA49937.1"/>
    <property type="molecule type" value="mRNA"/>
</dbReference>
<dbReference type="PIR" id="C42214">
    <property type="entry name" value="C42214"/>
</dbReference>
<dbReference type="RefSeq" id="NP_001081312.1">
    <property type="nucleotide sequence ID" value="NM_001087843.1"/>
</dbReference>
<dbReference type="SMR" id="P37234"/>
<dbReference type="BioGRID" id="99108">
    <property type="interactions" value="1"/>
</dbReference>
<dbReference type="DNASU" id="397769"/>
<dbReference type="GeneID" id="397769"/>
<dbReference type="KEGG" id="xla:397769"/>
<dbReference type="AGR" id="Xenbase:XB-GENE-483140"/>
<dbReference type="CTD" id="397769"/>
<dbReference type="Xenbase" id="XB-GENE-483140">
    <property type="gene designation" value="pparg.L"/>
</dbReference>
<dbReference type="OrthoDB" id="7634782at2759"/>
<dbReference type="Proteomes" id="UP000186698">
    <property type="component" value="Chromosome 4L"/>
</dbReference>
<dbReference type="Bgee" id="397769">
    <property type="expression patterns" value="Expressed in internal ear and 2 other cell types or tissues"/>
</dbReference>
<dbReference type="GO" id="GO:0005737">
    <property type="term" value="C:cytoplasm"/>
    <property type="evidence" value="ECO:0007669"/>
    <property type="project" value="UniProtKB-SubCell"/>
</dbReference>
<dbReference type="GO" id="GO:0005634">
    <property type="term" value="C:nucleus"/>
    <property type="evidence" value="ECO:0000318"/>
    <property type="project" value="GO_Central"/>
</dbReference>
<dbReference type="GO" id="GO:0001227">
    <property type="term" value="F:DNA-binding transcription repressor activity, RNA polymerase II-specific"/>
    <property type="evidence" value="ECO:0000318"/>
    <property type="project" value="GO_Central"/>
</dbReference>
<dbReference type="GO" id="GO:0004879">
    <property type="term" value="F:nuclear receptor activity"/>
    <property type="evidence" value="ECO:0000318"/>
    <property type="project" value="GO_Central"/>
</dbReference>
<dbReference type="GO" id="GO:0000978">
    <property type="term" value="F:RNA polymerase II cis-regulatory region sequence-specific DNA binding"/>
    <property type="evidence" value="ECO:0000318"/>
    <property type="project" value="GO_Central"/>
</dbReference>
<dbReference type="GO" id="GO:0008270">
    <property type="term" value="F:zinc ion binding"/>
    <property type="evidence" value="ECO:0007669"/>
    <property type="project" value="UniProtKB-KW"/>
</dbReference>
<dbReference type="GO" id="GO:0030154">
    <property type="term" value="P:cell differentiation"/>
    <property type="evidence" value="ECO:0000318"/>
    <property type="project" value="GO_Central"/>
</dbReference>
<dbReference type="GO" id="GO:0032869">
    <property type="term" value="P:cellular response to insulin stimulus"/>
    <property type="evidence" value="ECO:0000250"/>
    <property type="project" value="UniProtKB"/>
</dbReference>
<dbReference type="GO" id="GO:0006631">
    <property type="term" value="P:fatty acid metabolic process"/>
    <property type="evidence" value="ECO:0000318"/>
    <property type="project" value="GO_Central"/>
</dbReference>
<dbReference type="GO" id="GO:0009755">
    <property type="term" value="P:hormone-mediated signaling pathway"/>
    <property type="evidence" value="ECO:0000318"/>
    <property type="project" value="GO_Central"/>
</dbReference>
<dbReference type="GO" id="GO:0030522">
    <property type="term" value="P:intracellular receptor signaling pathway"/>
    <property type="evidence" value="ECO:0000318"/>
    <property type="project" value="GO_Central"/>
</dbReference>
<dbReference type="GO" id="GO:0010887">
    <property type="term" value="P:negative regulation of cholesterol storage"/>
    <property type="evidence" value="ECO:0000318"/>
    <property type="project" value="GO_Central"/>
</dbReference>
<dbReference type="GO" id="GO:0050728">
    <property type="term" value="P:negative regulation of inflammatory response"/>
    <property type="evidence" value="ECO:0000318"/>
    <property type="project" value="GO_Central"/>
</dbReference>
<dbReference type="GO" id="GO:0000122">
    <property type="term" value="P:negative regulation of transcription by RNA polymerase II"/>
    <property type="evidence" value="ECO:0000318"/>
    <property type="project" value="GO_Central"/>
</dbReference>
<dbReference type="GO" id="GO:0045923">
    <property type="term" value="P:positive regulation of fatty acid metabolic process"/>
    <property type="evidence" value="ECO:0000318"/>
    <property type="project" value="GO_Central"/>
</dbReference>
<dbReference type="GO" id="GO:0045944">
    <property type="term" value="P:positive regulation of transcription by RNA polymerase II"/>
    <property type="evidence" value="ECO:0000318"/>
    <property type="project" value="GO_Central"/>
</dbReference>
<dbReference type="GO" id="GO:0006357">
    <property type="term" value="P:regulation of transcription by RNA polymerase II"/>
    <property type="evidence" value="ECO:0000250"/>
    <property type="project" value="UniProtKB"/>
</dbReference>
<dbReference type="GO" id="GO:0048511">
    <property type="term" value="P:rhythmic process"/>
    <property type="evidence" value="ECO:0007669"/>
    <property type="project" value="UniProtKB-KW"/>
</dbReference>
<dbReference type="CDD" id="cd06965">
    <property type="entry name" value="NR_DBD_Ppar"/>
    <property type="match status" value="1"/>
</dbReference>
<dbReference type="CDD" id="cd06932">
    <property type="entry name" value="NR_LBD_PPAR"/>
    <property type="match status" value="1"/>
</dbReference>
<dbReference type="FunFam" id="1.10.565.10:FF:000017">
    <property type="entry name" value="Peroxisome proliferator-activated receptor gamma"/>
    <property type="match status" value="1"/>
</dbReference>
<dbReference type="FunFam" id="3.30.50.10:FF:000010">
    <property type="entry name" value="Peroxisome proliferator-activated receptor gamma"/>
    <property type="match status" value="1"/>
</dbReference>
<dbReference type="Gene3D" id="3.30.50.10">
    <property type="entry name" value="Erythroid Transcription Factor GATA-1, subunit A"/>
    <property type="match status" value="1"/>
</dbReference>
<dbReference type="Gene3D" id="1.10.565.10">
    <property type="entry name" value="Retinoid X Receptor"/>
    <property type="match status" value="1"/>
</dbReference>
<dbReference type="InterPro" id="IPR003074">
    <property type="entry name" value="1Cnucl_rcpt"/>
</dbReference>
<dbReference type="InterPro" id="IPR035500">
    <property type="entry name" value="NHR-like_dom_sf"/>
</dbReference>
<dbReference type="InterPro" id="IPR000536">
    <property type="entry name" value="Nucl_hrmn_rcpt_lig-bd"/>
</dbReference>
<dbReference type="InterPro" id="IPR050234">
    <property type="entry name" value="Nuclear_hormone_rcpt_NR1"/>
</dbReference>
<dbReference type="InterPro" id="IPR001723">
    <property type="entry name" value="Nuclear_hrmn_rcpt"/>
</dbReference>
<dbReference type="InterPro" id="IPR003077">
    <property type="entry name" value="PPAR-gamma"/>
</dbReference>
<dbReference type="InterPro" id="IPR022590">
    <property type="entry name" value="PPARgamma_N"/>
</dbReference>
<dbReference type="InterPro" id="IPR001628">
    <property type="entry name" value="Znf_hrmn_rcpt"/>
</dbReference>
<dbReference type="InterPro" id="IPR013088">
    <property type="entry name" value="Znf_NHR/GATA"/>
</dbReference>
<dbReference type="PANTHER" id="PTHR24082">
    <property type="entry name" value="NUCLEAR HORMONE RECEPTOR"/>
    <property type="match status" value="1"/>
</dbReference>
<dbReference type="PANTHER" id="PTHR24082:SF488">
    <property type="entry name" value="PEROXISOME PROLIFERATOR-ACTIVATED RECEPTOR GAMMA"/>
    <property type="match status" value="1"/>
</dbReference>
<dbReference type="Pfam" id="PF00104">
    <property type="entry name" value="Hormone_recep"/>
    <property type="match status" value="1"/>
</dbReference>
<dbReference type="Pfam" id="PF12577">
    <property type="entry name" value="PPARgamma_N"/>
    <property type="match status" value="1"/>
</dbReference>
<dbReference type="Pfam" id="PF00105">
    <property type="entry name" value="zf-C4"/>
    <property type="match status" value="1"/>
</dbReference>
<dbReference type="PRINTS" id="PR01288">
    <property type="entry name" value="PROXISOMEPAR"/>
</dbReference>
<dbReference type="PRINTS" id="PR01291">
    <property type="entry name" value="PROXISOMPAGR"/>
</dbReference>
<dbReference type="PRINTS" id="PR00398">
    <property type="entry name" value="STRDHORMONER"/>
</dbReference>
<dbReference type="PRINTS" id="PR00047">
    <property type="entry name" value="STROIDFINGER"/>
</dbReference>
<dbReference type="SMART" id="SM00430">
    <property type="entry name" value="HOLI"/>
    <property type="match status" value="1"/>
</dbReference>
<dbReference type="SMART" id="SM00399">
    <property type="entry name" value="ZnF_C4"/>
    <property type="match status" value="1"/>
</dbReference>
<dbReference type="SUPFAM" id="SSF57716">
    <property type="entry name" value="Glucocorticoid receptor-like (DNA-binding domain)"/>
    <property type="match status" value="1"/>
</dbReference>
<dbReference type="SUPFAM" id="SSF48508">
    <property type="entry name" value="Nuclear receptor ligand-binding domain"/>
    <property type="match status" value="1"/>
</dbReference>
<dbReference type="PROSITE" id="PS51843">
    <property type="entry name" value="NR_LBD"/>
    <property type="match status" value="1"/>
</dbReference>
<dbReference type="PROSITE" id="PS00031">
    <property type="entry name" value="NUCLEAR_REC_DBD_1"/>
    <property type="match status" value="1"/>
</dbReference>
<dbReference type="PROSITE" id="PS51030">
    <property type="entry name" value="NUCLEAR_REC_DBD_2"/>
    <property type="match status" value="1"/>
</dbReference>
<keyword id="KW-0010">Activator</keyword>
<keyword id="KW-0090">Biological rhythms</keyword>
<keyword id="KW-0963">Cytoplasm</keyword>
<keyword id="KW-0238">DNA-binding</keyword>
<keyword id="KW-0479">Metal-binding</keyword>
<keyword id="KW-0539">Nucleus</keyword>
<keyword id="KW-0597">Phosphoprotein</keyword>
<keyword id="KW-0675">Receptor</keyword>
<keyword id="KW-1185">Reference proteome</keyword>
<keyword id="KW-0804">Transcription</keyword>
<keyword id="KW-0805">Transcription regulation</keyword>
<keyword id="KW-0862">Zinc</keyword>
<keyword id="KW-0863">Zinc-finger</keyword>
<protein>
    <recommendedName>
        <fullName>Peroxisome proliferator-activated receptor gamma</fullName>
        <shortName>PPAR-gamma</shortName>
    </recommendedName>
    <alternativeName>
        <fullName>Nuclear receptor subfamily 1 group C member 3</fullName>
    </alternativeName>
</protein>